<proteinExistence type="inferred from homology"/>
<accession>B8N9M0</accession>
<evidence type="ECO:0000250" key="1"/>
<evidence type="ECO:0000255" key="2">
    <source>
        <dbReference type="PROSITE-ProRule" id="PRU00836"/>
    </source>
</evidence>
<evidence type="ECO:0000256" key="3">
    <source>
        <dbReference type="SAM" id="MobiDB-lite"/>
    </source>
</evidence>
<evidence type="ECO:0000305" key="4"/>
<feature type="chain" id="PRO_0000399616" description="Respiratory supercomplex factor 1, mitochondrial">
    <location>
        <begin position="1"/>
        <end position="176"/>
    </location>
</feature>
<feature type="transmembrane region" description="Helical" evidence="2">
    <location>
        <begin position="33"/>
        <end position="49"/>
    </location>
</feature>
<feature type="transmembrane region" description="Helical" evidence="2">
    <location>
        <begin position="69"/>
        <end position="86"/>
    </location>
</feature>
<feature type="domain" description="HIG1" evidence="2">
    <location>
        <begin position="6"/>
        <end position="97"/>
    </location>
</feature>
<feature type="region of interest" description="Disordered" evidence="3">
    <location>
        <begin position="129"/>
        <end position="158"/>
    </location>
</feature>
<feature type="compositionally biased region" description="Basic and acidic residues" evidence="3">
    <location>
        <begin position="140"/>
        <end position="158"/>
    </location>
</feature>
<organism>
    <name type="scientific">Aspergillus flavus (strain ATCC 200026 / FGSC A1120 / IAM 13836 / NRRL 3357 / JCM 12722 / SRRC 167)</name>
    <dbReference type="NCBI Taxonomy" id="332952"/>
    <lineage>
        <taxon>Eukaryota</taxon>
        <taxon>Fungi</taxon>
        <taxon>Dikarya</taxon>
        <taxon>Ascomycota</taxon>
        <taxon>Pezizomycotina</taxon>
        <taxon>Eurotiomycetes</taxon>
        <taxon>Eurotiomycetidae</taxon>
        <taxon>Eurotiales</taxon>
        <taxon>Aspergillaceae</taxon>
        <taxon>Aspergillus</taxon>
        <taxon>Aspergillus subgen. Circumdati</taxon>
    </lineage>
</organism>
<name>RCF1_ASPFN</name>
<comment type="function">
    <text evidence="1">Cytochrome c oxidase subunit which plays a role in assembly of respiratory supercomplexes.</text>
</comment>
<comment type="subunit">
    <text evidence="1">Associates with the respiratory chain complex III/complex IV supercomplex.</text>
</comment>
<comment type="subcellular location">
    <subcellularLocation>
        <location evidence="2">Mitochondrion membrane</location>
        <topology evidence="2">Multi-pass membrane protein</topology>
    </subcellularLocation>
</comment>
<comment type="similarity">
    <text evidence="4">Belongs to the RCF1 family.</text>
</comment>
<gene>
    <name type="primary">rcf1</name>
    <name type="synonym">aim31</name>
    <name type="ORF">AFLA_111660</name>
</gene>
<dbReference type="EMBL" id="EQ963475">
    <property type="protein sequence ID" value="EED53789.1"/>
    <property type="molecule type" value="Genomic_DNA"/>
</dbReference>
<dbReference type="RefSeq" id="XP_002377035.1">
    <property type="nucleotide sequence ID" value="XM_002376994.1"/>
</dbReference>
<dbReference type="STRING" id="332952.B8N9M0"/>
<dbReference type="EnsemblFungi" id="EED53789">
    <property type="protein sequence ID" value="EED53789"/>
    <property type="gene ID" value="AFLA_111660"/>
</dbReference>
<dbReference type="VEuPathDB" id="FungiDB:AFLA_007102"/>
<dbReference type="eggNOG" id="KOG4431">
    <property type="taxonomic scope" value="Eukaryota"/>
</dbReference>
<dbReference type="HOGENOM" id="CLU_087356_0_2_1"/>
<dbReference type="OMA" id="QRWIREL"/>
<dbReference type="GO" id="GO:0031966">
    <property type="term" value="C:mitochondrial membrane"/>
    <property type="evidence" value="ECO:0007669"/>
    <property type="project" value="UniProtKB-SubCell"/>
</dbReference>
<dbReference type="GO" id="GO:0097250">
    <property type="term" value="P:mitochondrial respirasome assembly"/>
    <property type="evidence" value="ECO:0007669"/>
    <property type="project" value="TreeGrafter"/>
</dbReference>
<dbReference type="Gene3D" id="6.10.140.1320">
    <property type="match status" value="1"/>
</dbReference>
<dbReference type="InterPro" id="IPR007667">
    <property type="entry name" value="Hypoxia_induced_domain"/>
</dbReference>
<dbReference type="InterPro" id="IPR050355">
    <property type="entry name" value="RCF1"/>
</dbReference>
<dbReference type="PANTHER" id="PTHR12297:SF3">
    <property type="entry name" value="HIG1 DOMAIN FAMILY MEMBER 1A"/>
    <property type="match status" value="1"/>
</dbReference>
<dbReference type="PANTHER" id="PTHR12297">
    <property type="entry name" value="HYPOXIA-INDUCBILE GENE 1 HIG1 -RELATED"/>
    <property type="match status" value="1"/>
</dbReference>
<dbReference type="Pfam" id="PF04588">
    <property type="entry name" value="HIG_1_N"/>
    <property type="match status" value="1"/>
</dbReference>
<dbReference type="PROSITE" id="PS51503">
    <property type="entry name" value="HIG1"/>
    <property type="match status" value="1"/>
</dbReference>
<keyword id="KW-0472">Membrane</keyword>
<keyword id="KW-0496">Mitochondrion</keyword>
<keyword id="KW-0812">Transmembrane</keyword>
<keyword id="KW-1133">Transmembrane helix</keyword>
<sequence>MSSDPVPSSFEGNPQFEEETSLQKFRRRLKEEPLIPLGCAATSYALYRAYRSMKAGDSVEMNRMFRARIYAQFFTLIAVVVGGMYFKTERQQRKEFERMVEERKSQEKRDAWLRELEIRDKEDKDWRQRHAAMEAAAAEAGKKTAPHDAARSAIERSEEKSIGVLDAVKELLSRRN</sequence>
<protein>
    <recommendedName>
        <fullName>Respiratory supercomplex factor 1, mitochondrial</fullName>
    </recommendedName>
</protein>
<reference key="1">
    <citation type="journal article" date="2015" name="Genome Announc.">
        <title>Genome sequence of Aspergillus flavus NRRL 3357, a strain that causes aflatoxin contamination of food and feed.</title>
        <authorList>
            <person name="Nierman W.C."/>
            <person name="Yu J."/>
            <person name="Fedorova-Abrams N.D."/>
            <person name="Losada L."/>
            <person name="Cleveland T.E."/>
            <person name="Bhatnagar D."/>
            <person name="Bennett J.W."/>
            <person name="Dean R."/>
            <person name="Payne G.A."/>
        </authorList>
    </citation>
    <scope>NUCLEOTIDE SEQUENCE [LARGE SCALE GENOMIC DNA]</scope>
    <source>
        <strain>ATCC 200026 / FGSC A1120 / IAM 13836 / NRRL 3357 / JCM 12722 / SRRC 167</strain>
    </source>
</reference>